<gene>
    <name type="primary">Fgf18</name>
</gene>
<name>FGF18_MOUSE</name>
<keyword id="KW-1015">Disulfide bond</keyword>
<keyword id="KW-0325">Glycoprotein</keyword>
<keyword id="KW-0339">Growth factor</keyword>
<keyword id="KW-1185">Reference proteome</keyword>
<keyword id="KW-0964">Secreted</keyword>
<keyword id="KW-0732">Signal</keyword>
<reference key="1">
    <citation type="journal article" date="1998" name="Mol. Cell. Biol.">
        <title>FGF-18, a novel member of the fibroblast growth factor family, stimulates hepatic and intestinal proliferation.</title>
        <authorList>
            <person name="Hu M.C.-T."/>
            <person name="Qiu W.R."/>
            <person name="Wang Y.-P."/>
            <person name="Hill D."/>
            <person name="Ring B.D."/>
            <person name="Scully S."/>
            <person name="Bolon B."/>
            <person name="Derose M."/>
            <person name="Luethy R."/>
            <person name="Simonet W.S."/>
            <person name="Arakawa T."/>
            <person name="Danilenko D.M."/>
        </authorList>
    </citation>
    <scope>NUCLEOTIDE SEQUENCE [MRNA]</scope>
</reference>
<reference key="2">
    <citation type="journal article" date="1998" name="J. Biol. Chem.">
        <title>Structure and expression of the mRNA encoding a novel fibroblast growth factor, FGF-18.</title>
        <authorList>
            <person name="Ohbayashi N."/>
            <person name="Hoshikawa M."/>
            <person name="Kimura S."/>
            <person name="Yamasaki M."/>
            <person name="Fukui S."/>
            <person name="Ito N."/>
        </authorList>
    </citation>
    <scope>NUCLEOTIDE SEQUENCE [MRNA]</scope>
    <source>
        <tissue>Embryo</tissue>
    </source>
</reference>
<reference key="3">
    <citation type="submission" date="1999-12" db="EMBL/GenBank/DDBJ databases">
        <authorList>
            <person name="Deisher T."/>
            <person name="Conklin D."/>
            <person name="Raymond F."/>
            <person name="Bukowski T."/>
            <person name="Holderman S."/>
            <person name="Hansen B."/>
            <person name="Sheppard P."/>
            <person name="O'Hara P."/>
        </authorList>
    </citation>
    <scope>NUCLEOTIDE SEQUENCE [MRNA]</scope>
</reference>
<proteinExistence type="evidence at transcript level"/>
<protein>
    <recommendedName>
        <fullName>Fibroblast growth factor 18</fullName>
        <shortName>FGF-18</shortName>
    </recommendedName>
    <alternativeName>
        <fullName>zFGF5</fullName>
    </alternativeName>
</protein>
<evidence type="ECO:0000250" key="1"/>
<evidence type="ECO:0000255" key="2"/>
<evidence type="ECO:0000305" key="3"/>
<dbReference type="EMBL" id="AF075291">
    <property type="protein sequence ID" value="AAC62239.1"/>
    <property type="molecule type" value="mRNA"/>
</dbReference>
<dbReference type="EMBL" id="AB004639">
    <property type="protein sequence ID" value="BAA31980.1"/>
    <property type="molecule type" value="mRNA"/>
</dbReference>
<dbReference type="EMBL" id="AF211187">
    <property type="protein sequence ID" value="AAF22976.1"/>
    <property type="molecule type" value="mRNA"/>
</dbReference>
<dbReference type="CCDS" id="CCDS24531.1"/>
<dbReference type="RefSeq" id="NP_032031.1">
    <property type="nucleotide sequence ID" value="NM_008005.2"/>
</dbReference>
<dbReference type="SMR" id="O89101"/>
<dbReference type="FunCoup" id="O89101">
    <property type="interactions" value="1486"/>
</dbReference>
<dbReference type="STRING" id="10090.ENSMUSP00000020507"/>
<dbReference type="GlyCosmos" id="O89101">
    <property type="glycosylation" value="2 sites, No reported glycans"/>
</dbReference>
<dbReference type="GlyGen" id="O89101">
    <property type="glycosylation" value="2 sites"/>
</dbReference>
<dbReference type="PhosphoSitePlus" id="O89101"/>
<dbReference type="PaxDb" id="10090-ENSMUSP00000020507"/>
<dbReference type="ProteomicsDB" id="271576"/>
<dbReference type="Antibodypedia" id="16955">
    <property type="antibodies" value="222 antibodies from 30 providers"/>
</dbReference>
<dbReference type="DNASU" id="14172"/>
<dbReference type="Ensembl" id="ENSMUST00000020507.8">
    <property type="protein sequence ID" value="ENSMUSP00000020507.8"/>
    <property type="gene ID" value="ENSMUSG00000057967.13"/>
</dbReference>
<dbReference type="GeneID" id="14172"/>
<dbReference type="KEGG" id="mmu:14172"/>
<dbReference type="UCSC" id="uc007ikc.2">
    <property type="organism name" value="mouse"/>
</dbReference>
<dbReference type="AGR" id="MGI:1277980"/>
<dbReference type="CTD" id="8817"/>
<dbReference type="MGI" id="MGI:1277980">
    <property type="gene designation" value="Fgf18"/>
</dbReference>
<dbReference type="VEuPathDB" id="HostDB:ENSMUSG00000057967"/>
<dbReference type="eggNOG" id="KOG3885">
    <property type="taxonomic scope" value="Eukaryota"/>
</dbReference>
<dbReference type="GeneTree" id="ENSGT00940000159553"/>
<dbReference type="HOGENOM" id="CLU_090682_1_0_1"/>
<dbReference type="InParanoid" id="O89101"/>
<dbReference type="OMA" id="XPHSAMS"/>
<dbReference type="OrthoDB" id="5988014at2759"/>
<dbReference type="PhylomeDB" id="O89101"/>
<dbReference type="TreeFam" id="TF331233"/>
<dbReference type="Reactome" id="R-MMU-109704">
    <property type="pathway name" value="PI3K Cascade"/>
</dbReference>
<dbReference type="Reactome" id="R-MMU-1257604">
    <property type="pathway name" value="PIP3 activates AKT signaling"/>
</dbReference>
<dbReference type="Reactome" id="R-MMU-190322">
    <property type="pathway name" value="FGFR4 ligand binding and activation"/>
</dbReference>
<dbReference type="Reactome" id="R-MMU-190371">
    <property type="pathway name" value="FGFR3b ligand binding and activation"/>
</dbReference>
<dbReference type="Reactome" id="R-MMU-190372">
    <property type="pathway name" value="FGFR3c ligand binding and activation"/>
</dbReference>
<dbReference type="Reactome" id="R-MMU-190375">
    <property type="pathway name" value="FGFR2c ligand binding and activation"/>
</dbReference>
<dbReference type="Reactome" id="R-MMU-5654221">
    <property type="pathway name" value="Phospholipase C-mediated cascade, FGFR2"/>
</dbReference>
<dbReference type="Reactome" id="R-MMU-5654227">
    <property type="pathway name" value="Phospholipase C-mediated cascade, FGFR3"/>
</dbReference>
<dbReference type="Reactome" id="R-MMU-5654228">
    <property type="pathway name" value="Phospholipase C-mediated cascade, FGFR4"/>
</dbReference>
<dbReference type="Reactome" id="R-MMU-5654695">
    <property type="pathway name" value="PI-3K cascade:FGFR2"/>
</dbReference>
<dbReference type="Reactome" id="R-MMU-5654699">
    <property type="pathway name" value="SHC-mediated cascade:FGFR2"/>
</dbReference>
<dbReference type="Reactome" id="R-MMU-5654700">
    <property type="pathway name" value="FRS-mediated FGFR2 signaling"/>
</dbReference>
<dbReference type="Reactome" id="R-MMU-5654704">
    <property type="pathway name" value="SHC-mediated cascade:FGFR3"/>
</dbReference>
<dbReference type="Reactome" id="R-MMU-5654706">
    <property type="pathway name" value="FRS-mediated FGFR3 signaling"/>
</dbReference>
<dbReference type="Reactome" id="R-MMU-5654710">
    <property type="pathway name" value="PI-3K cascade:FGFR3"/>
</dbReference>
<dbReference type="Reactome" id="R-MMU-5654712">
    <property type="pathway name" value="FRS-mediated FGFR4 signaling"/>
</dbReference>
<dbReference type="Reactome" id="R-MMU-5654719">
    <property type="pathway name" value="SHC-mediated cascade:FGFR4"/>
</dbReference>
<dbReference type="Reactome" id="R-MMU-5654720">
    <property type="pathway name" value="PI-3K cascade:FGFR4"/>
</dbReference>
<dbReference type="Reactome" id="R-MMU-5654727">
    <property type="pathway name" value="Negative regulation of FGFR2 signaling"/>
</dbReference>
<dbReference type="Reactome" id="R-MMU-5654732">
    <property type="pathway name" value="Negative regulation of FGFR3 signaling"/>
</dbReference>
<dbReference type="Reactome" id="R-MMU-5654733">
    <property type="pathway name" value="Negative regulation of FGFR4 signaling"/>
</dbReference>
<dbReference type="Reactome" id="R-MMU-5658623">
    <property type="pathway name" value="FGFRL1 modulation of FGFR1 signaling"/>
</dbReference>
<dbReference type="Reactome" id="R-MMU-5673001">
    <property type="pathway name" value="RAF/MAP kinase cascade"/>
</dbReference>
<dbReference type="Reactome" id="R-MMU-6811558">
    <property type="pathway name" value="PI5P, PP2A and IER3 Regulate PI3K/AKT Signaling"/>
</dbReference>
<dbReference type="BioGRID-ORCS" id="14172">
    <property type="hits" value="1 hit in 79 CRISPR screens"/>
</dbReference>
<dbReference type="PRO" id="PR:O89101"/>
<dbReference type="Proteomes" id="UP000000589">
    <property type="component" value="Chromosome 11"/>
</dbReference>
<dbReference type="RNAct" id="O89101">
    <property type="molecule type" value="protein"/>
</dbReference>
<dbReference type="Bgee" id="ENSMUSG00000057967">
    <property type="expression patterns" value="Expressed in mesenchyme of tongue and 166 other cell types or tissues"/>
</dbReference>
<dbReference type="ExpressionAtlas" id="O89101">
    <property type="expression patterns" value="baseline and differential"/>
</dbReference>
<dbReference type="GO" id="GO:0005576">
    <property type="term" value="C:extracellular region"/>
    <property type="evidence" value="ECO:0007669"/>
    <property type="project" value="UniProtKB-SubCell"/>
</dbReference>
<dbReference type="GO" id="GO:0005730">
    <property type="term" value="C:nucleolus"/>
    <property type="evidence" value="ECO:0007669"/>
    <property type="project" value="Ensembl"/>
</dbReference>
<dbReference type="GO" id="GO:0005104">
    <property type="term" value="F:fibroblast growth factor receptor binding"/>
    <property type="evidence" value="ECO:0000304"/>
    <property type="project" value="MGI"/>
</dbReference>
<dbReference type="GO" id="GO:0008083">
    <property type="term" value="F:growth factor activity"/>
    <property type="evidence" value="ECO:0007669"/>
    <property type="project" value="UniProtKB-KW"/>
</dbReference>
<dbReference type="GO" id="GO:0005105">
    <property type="term" value="F:type 1 fibroblast growth factor receptor binding"/>
    <property type="evidence" value="ECO:0007669"/>
    <property type="project" value="Ensembl"/>
</dbReference>
<dbReference type="GO" id="GO:0005111">
    <property type="term" value="F:type 2 fibroblast growth factor receptor binding"/>
    <property type="evidence" value="ECO:0007669"/>
    <property type="project" value="Ensembl"/>
</dbReference>
<dbReference type="GO" id="GO:0001525">
    <property type="term" value="P:angiogenesis"/>
    <property type="evidence" value="ECO:0000315"/>
    <property type="project" value="MGI"/>
</dbReference>
<dbReference type="GO" id="GO:0008283">
    <property type="term" value="P:cell population proliferation"/>
    <property type="evidence" value="ECO:0000315"/>
    <property type="project" value="MGI"/>
</dbReference>
<dbReference type="GO" id="GO:0002063">
    <property type="term" value="P:chondrocyte development"/>
    <property type="evidence" value="ECO:0000315"/>
    <property type="project" value="MGI"/>
</dbReference>
<dbReference type="GO" id="GO:0002062">
    <property type="term" value="P:chondrocyte differentiation"/>
    <property type="evidence" value="ECO:0000316"/>
    <property type="project" value="MGI"/>
</dbReference>
<dbReference type="GO" id="GO:0001958">
    <property type="term" value="P:endochondral ossification"/>
    <property type="evidence" value="ECO:0000315"/>
    <property type="project" value="MGI"/>
</dbReference>
<dbReference type="GO" id="GO:0070371">
    <property type="term" value="P:ERK1 and ERK2 cascade"/>
    <property type="evidence" value="ECO:0000314"/>
    <property type="project" value="MGI"/>
</dbReference>
<dbReference type="GO" id="GO:0008543">
    <property type="term" value="P:fibroblast growth factor receptor signaling pathway"/>
    <property type="evidence" value="ECO:0000316"/>
    <property type="project" value="MGI"/>
</dbReference>
<dbReference type="GO" id="GO:0001957">
    <property type="term" value="P:intramembranous ossification"/>
    <property type="evidence" value="ECO:0000315"/>
    <property type="project" value="MGI"/>
</dbReference>
<dbReference type="GO" id="GO:0030324">
    <property type="term" value="P:lung development"/>
    <property type="evidence" value="ECO:0000315"/>
    <property type="project" value="MGI"/>
</dbReference>
<dbReference type="GO" id="GO:0001503">
    <property type="term" value="P:ossification"/>
    <property type="evidence" value="ECO:0000315"/>
    <property type="project" value="MGI"/>
</dbReference>
<dbReference type="GO" id="GO:0045766">
    <property type="term" value="P:positive regulation of angiogenesis"/>
    <property type="evidence" value="ECO:0007669"/>
    <property type="project" value="Ensembl"/>
</dbReference>
<dbReference type="GO" id="GO:0043536">
    <property type="term" value="P:positive regulation of blood vessel endothelial cell migration"/>
    <property type="evidence" value="ECO:0007669"/>
    <property type="project" value="Ensembl"/>
</dbReference>
<dbReference type="GO" id="GO:0008284">
    <property type="term" value="P:positive regulation of cell population proliferation"/>
    <property type="evidence" value="ECO:0000315"/>
    <property type="project" value="MGI"/>
</dbReference>
<dbReference type="GO" id="GO:0032332">
    <property type="term" value="P:positive regulation of chondrocyte differentiation"/>
    <property type="evidence" value="ECO:0000316"/>
    <property type="project" value="MGI"/>
</dbReference>
<dbReference type="GO" id="GO:2000546">
    <property type="term" value="P:positive regulation of endothelial cell chemotaxis to fibroblast growth factor"/>
    <property type="evidence" value="ECO:0007669"/>
    <property type="project" value="Ensembl"/>
</dbReference>
<dbReference type="GO" id="GO:0070374">
    <property type="term" value="P:positive regulation of ERK1 and ERK2 cascade"/>
    <property type="evidence" value="ECO:0000314"/>
    <property type="project" value="MGI"/>
</dbReference>
<dbReference type="GO" id="GO:0030949">
    <property type="term" value="P:positive regulation of vascular endothelial growth factor receptor signaling pathway"/>
    <property type="evidence" value="ECO:0000315"/>
    <property type="project" value="MGI"/>
</dbReference>
<dbReference type="GO" id="GO:0007165">
    <property type="term" value="P:signal transduction"/>
    <property type="evidence" value="ECO:0000304"/>
    <property type="project" value="MGI"/>
</dbReference>
<dbReference type="GO" id="GO:0048010">
    <property type="term" value="P:vascular endothelial growth factor receptor signaling pathway"/>
    <property type="evidence" value="ECO:0000315"/>
    <property type="project" value="MGI"/>
</dbReference>
<dbReference type="CDD" id="cd23324">
    <property type="entry name" value="beta-trefoil_FGF18"/>
    <property type="match status" value="1"/>
</dbReference>
<dbReference type="FunFam" id="2.80.10.50:FF:000007">
    <property type="entry name" value="Fibroblast growth factor"/>
    <property type="match status" value="1"/>
</dbReference>
<dbReference type="Gene3D" id="2.80.10.50">
    <property type="match status" value="1"/>
</dbReference>
<dbReference type="InterPro" id="IPR002209">
    <property type="entry name" value="Fibroblast_GF_fam"/>
</dbReference>
<dbReference type="InterPro" id="IPR008996">
    <property type="entry name" value="IL1/FGF"/>
</dbReference>
<dbReference type="PANTHER" id="PTHR11486">
    <property type="entry name" value="FIBROBLAST GROWTH FACTOR"/>
    <property type="match status" value="1"/>
</dbReference>
<dbReference type="Pfam" id="PF00167">
    <property type="entry name" value="FGF"/>
    <property type="match status" value="1"/>
</dbReference>
<dbReference type="PRINTS" id="PR00262">
    <property type="entry name" value="IL1HBGF"/>
</dbReference>
<dbReference type="SMART" id="SM00442">
    <property type="entry name" value="FGF"/>
    <property type="match status" value="1"/>
</dbReference>
<dbReference type="SUPFAM" id="SSF50353">
    <property type="entry name" value="Cytokine"/>
    <property type="match status" value="1"/>
</dbReference>
<dbReference type="PROSITE" id="PS00247">
    <property type="entry name" value="HBGF_FGF"/>
    <property type="match status" value="1"/>
</dbReference>
<organism>
    <name type="scientific">Mus musculus</name>
    <name type="common">Mouse</name>
    <dbReference type="NCBI Taxonomy" id="10090"/>
    <lineage>
        <taxon>Eukaryota</taxon>
        <taxon>Metazoa</taxon>
        <taxon>Chordata</taxon>
        <taxon>Craniata</taxon>
        <taxon>Vertebrata</taxon>
        <taxon>Euteleostomi</taxon>
        <taxon>Mammalia</taxon>
        <taxon>Eutheria</taxon>
        <taxon>Euarchontoglires</taxon>
        <taxon>Glires</taxon>
        <taxon>Rodentia</taxon>
        <taxon>Myomorpha</taxon>
        <taxon>Muroidea</taxon>
        <taxon>Muridae</taxon>
        <taxon>Murinae</taxon>
        <taxon>Mus</taxon>
        <taxon>Mus</taxon>
    </lineage>
</organism>
<comment type="function">
    <text evidence="1">Plays an important role in the regulation of cell proliferation, cell differentiation and cell migration. Required for normal ossification and bone development. Stimulates hepatic and intestinal proliferation (By similarity).</text>
</comment>
<comment type="subunit">
    <text evidence="1">Interacts with FGFR3 and FGFR4.</text>
</comment>
<comment type="subcellular location">
    <subcellularLocation>
        <location evidence="1">Secreted</location>
    </subcellularLocation>
</comment>
<comment type="similarity">
    <text evidence="3">Belongs to the heparin-binding growth factors family.</text>
</comment>
<feature type="signal peptide" evidence="2">
    <location>
        <begin position="1"/>
        <end position="27"/>
    </location>
</feature>
<feature type="chain" id="PRO_0000008991" description="Fibroblast growth factor 18">
    <location>
        <begin position="28"/>
        <end position="207"/>
    </location>
</feature>
<feature type="glycosylation site" description="N-linked (GlcNAc...) asparagine" evidence="2">
    <location>
        <position position="39"/>
    </location>
</feature>
<feature type="glycosylation site" description="N-linked (GlcNAc...) asparagine" evidence="2">
    <location>
        <position position="137"/>
    </location>
</feature>
<feature type="disulfide bond" evidence="1">
    <location>
        <begin position="109"/>
        <end position="127"/>
    </location>
</feature>
<accession>O89101</accession>
<sequence>MYSAPSACTCLCLHFLLLCFQVQVLAAEENVDFRIHVENQTRARDDVSRKQLRLYQLYSRTSGKHIQVLGRRISARGEDGDKYAQLLVETDTFGSQVRIKGKETEFYLCMNRKGKLVGKPDGTSKECVFIEKVLENNYTALMSAKYSGWYVGFTKKGRPRKGPKTRENQQDVHFMKRYPKGQAELQKPFKYTTVTKRSRRIRPTHPG</sequence>